<proteinExistence type="inferred from homology"/>
<organism>
    <name type="scientific">Mycolicibacterium vanbaalenii (strain DSM 7251 / JCM 13017 / BCRC 16820 / KCTC 9966 / NRRL B-24157 / PYR-1)</name>
    <name type="common">Mycobacterium vanbaalenii</name>
    <dbReference type="NCBI Taxonomy" id="350058"/>
    <lineage>
        <taxon>Bacteria</taxon>
        <taxon>Bacillati</taxon>
        <taxon>Actinomycetota</taxon>
        <taxon>Actinomycetes</taxon>
        <taxon>Mycobacteriales</taxon>
        <taxon>Mycobacteriaceae</taxon>
        <taxon>Mycolicibacterium</taxon>
    </lineage>
</organism>
<dbReference type="EMBL" id="CP000511">
    <property type="protein sequence ID" value="ABM12639.1"/>
    <property type="molecule type" value="Genomic_DNA"/>
</dbReference>
<dbReference type="RefSeq" id="WP_011779057.1">
    <property type="nucleotide sequence ID" value="NC_008726.1"/>
</dbReference>
<dbReference type="SMR" id="A1T639"/>
<dbReference type="STRING" id="350058.Mvan_1817"/>
<dbReference type="KEGG" id="mva:Mvan_1817"/>
<dbReference type="eggNOG" id="COG0326">
    <property type="taxonomic scope" value="Bacteria"/>
</dbReference>
<dbReference type="HOGENOM" id="CLU_006684_3_0_11"/>
<dbReference type="Proteomes" id="UP000009159">
    <property type="component" value="Chromosome"/>
</dbReference>
<dbReference type="GO" id="GO:0005737">
    <property type="term" value="C:cytoplasm"/>
    <property type="evidence" value="ECO:0007669"/>
    <property type="project" value="UniProtKB-SubCell"/>
</dbReference>
<dbReference type="GO" id="GO:0005524">
    <property type="term" value="F:ATP binding"/>
    <property type="evidence" value="ECO:0007669"/>
    <property type="project" value="UniProtKB-UniRule"/>
</dbReference>
<dbReference type="GO" id="GO:0016887">
    <property type="term" value="F:ATP hydrolysis activity"/>
    <property type="evidence" value="ECO:0007669"/>
    <property type="project" value="InterPro"/>
</dbReference>
<dbReference type="GO" id="GO:0140662">
    <property type="term" value="F:ATP-dependent protein folding chaperone"/>
    <property type="evidence" value="ECO:0007669"/>
    <property type="project" value="InterPro"/>
</dbReference>
<dbReference type="GO" id="GO:0051082">
    <property type="term" value="F:unfolded protein binding"/>
    <property type="evidence" value="ECO:0007669"/>
    <property type="project" value="UniProtKB-UniRule"/>
</dbReference>
<dbReference type="CDD" id="cd16927">
    <property type="entry name" value="HATPase_Hsp90-like"/>
    <property type="match status" value="1"/>
</dbReference>
<dbReference type="FunFam" id="1.20.120.790:FF:000006">
    <property type="entry name" value="Chaperone protein HtpG"/>
    <property type="match status" value="1"/>
</dbReference>
<dbReference type="FunFam" id="3.40.50.11260:FF:000005">
    <property type="entry name" value="Heat shock protein 90"/>
    <property type="match status" value="1"/>
</dbReference>
<dbReference type="FunFam" id="3.30.230.80:FF:000002">
    <property type="entry name" value="Molecular chaperone HtpG"/>
    <property type="match status" value="1"/>
</dbReference>
<dbReference type="FunFam" id="3.30.565.10:FF:000009">
    <property type="entry name" value="Molecular chaperone HtpG"/>
    <property type="match status" value="1"/>
</dbReference>
<dbReference type="Gene3D" id="3.30.230.80">
    <property type="match status" value="1"/>
</dbReference>
<dbReference type="Gene3D" id="3.40.50.11260">
    <property type="match status" value="1"/>
</dbReference>
<dbReference type="Gene3D" id="1.20.120.790">
    <property type="entry name" value="Heat shock protein 90, C-terminal domain"/>
    <property type="match status" value="1"/>
</dbReference>
<dbReference type="Gene3D" id="3.30.565.10">
    <property type="entry name" value="Histidine kinase-like ATPase, C-terminal domain"/>
    <property type="match status" value="1"/>
</dbReference>
<dbReference type="HAMAP" id="MF_00505">
    <property type="entry name" value="HSP90"/>
    <property type="match status" value="1"/>
</dbReference>
<dbReference type="InterPro" id="IPR036890">
    <property type="entry name" value="HATPase_C_sf"/>
</dbReference>
<dbReference type="InterPro" id="IPR037196">
    <property type="entry name" value="HSP90_C"/>
</dbReference>
<dbReference type="InterPro" id="IPR001404">
    <property type="entry name" value="Hsp90_fam"/>
</dbReference>
<dbReference type="InterPro" id="IPR020575">
    <property type="entry name" value="Hsp90_N"/>
</dbReference>
<dbReference type="InterPro" id="IPR020568">
    <property type="entry name" value="Ribosomal_Su5_D2-typ_SF"/>
</dbReference>
<dbReference type="NCBIfam" id="NF003555">
    <property type="entry name" value="PRK05218.1"/>
    <property type="match status" value="1"/>
</dbReference>
<dbReference type="PANTHER" id="PTHR11528">
    <property type="entry name" value="HEAT SHOCK PROTEIN 90 FAMILY MEMBER"/>
    <property type="match status" value="1"/>
</dbReference>
<dbReference type="Pfam" id="PF13589">
    <property type="entry name" value="HATPase_c_3"/>
    <property type="match status" value="1"/>
</dbReference>
<dbReference type="Pfam" id="PF00183">
    <property type="entry name" value="HSP90"/>
    <property type="match status" value="1"/>
</dbReference>
<dbReference type="PIRSF" id="PIRSF002583">
    <property type="entry name" value="Hsp90"/>
    <property type="match status" value="1"/>
</dbReference>
<dbReference type="PRINTS" id="PR00775">
    <property type="entry name" value="HEATSHOCK90"/>
</dbReference>
<dbReference type="SMART" id="SM00387">
    <property type="entry name" value="HATPase_c"/>
    <property type="match status" value="1"/>
</dbReference>
<dbReference type="SUPFAM" id="SSF55874">
    <property type="entry name" value="ATPase domain of HSP90 chaperone/DNA topoisomerase II/histidine kinase"/>
    <property type="match status" value="1"/>
</dbReference>
<dbReference type="SUPFAM" id="SSF110942">
    <property type="entry name" value="HSP90 C-terminal domain"/>
    <property type="match status" value="1"/>
</dbReference>
<dbReference type="SUPFAM" id="SSF54211">
    <property type="entry name" value="Ribosomal protein S5 domain 2-like"/>
    <property type="match status" value="1"/>
</dbReference>
<keyword id="KW-0067">ATP-binding</keyword>
<keyword id="KW-0143">Chaperone</keyword>
<keyword id="KW-0963">Cytoplasm</keyword>
<keyword id="KW-0547">Nucleotide-binding</keyword>
<keyword id="KW-0346">Stress response</keyword>
<reference key="1">
    <citation type="submission" date="2006-12" db="EMBL/GenBank/DDBJ databases">
        <title>Complete sequence of Mycobacterium vanbaalenii PYR-1.</title>
        <authorList>
            <consortium name="US DOE Joint Genome Institute"/>
            <person name="Copeland A."/>
            <person name="Lucas S."/>
            <person name="Lapidus A."/>
            <person name="Barry K."/>
            <person name="Detter J.C."/>
            <person name="Glavina del Rio T."/>
            <person name="Hammon N."/>
            <person name="Israni S."/>
            <person name="Dalin E."/>
            <person name="Tice H."/>
            <person name="Pitluck S."/>
            <person name="Singan V."/>
            <person name="Schmutz J."/>
            <person name="Larimer F."/>
            <person name="Land M."/>
            <person name="Hauser L."/>
            <person name="Kyrpides N."/>
            <person name="Anderson I.J."/>
            <person name="Miller C."/>
            <person name="Richardson P."/>
        </authorList>
    </citation>
    <scope>NUCLEOTIDE SEQUENCE [LARGE SCALE GENOMIC DNA]</scope>
    <source>
        <strain>DSM 7251 / JCM 13017 / BCRC 16820 / KCTC 9966 / NRRL B-24157 / PYR-1</strain>
    </source>
</reference>
<accession>A1T639</accession>
<feature type="chain" id="PRO_1000014934" description="Chaperone protein HtpG">
    <location>
        <begin position="1"/>
        <end position="651"/>
    </location>
</feature>
<feature type="region of interest" description="A; substrate-binding" evidence="1">
    <location>
        <begin position="1"/>
        <end position="353"/>
    </location>
</feature>
<feature type="region of interest" description="B" evidence="1">
    <location>
        <begin position="354"/>
        <end position="569"/>
    </location>
</feature>
<feature type="region of interest" description="C" evidence="1">
    <location>
        <begin position="570"/>
        <end position="651"/>
    </location>
</feature>
<evidence type="ECO:0000255" key="1">
    <source>
        <dbReference type="HAMAP-Rule" id="MF_00505"/>
    </source>
</evidence>
<gene>
    <name evidence="1" type="primary">htpG</name>
    <name type="ordered locus">Mvan_1817</name>
</gene>
<comment type="function">
    <text evidence="1">Molecular chaperone. Has ATPase activity.</text>
</comment>
<comment type="subunit">
    <text evidence="1">Homodimer.</text>
</comment>
<comment type="subcellular location">
    <subcellularLocation>
        <location evidence="1">Cytoplasm</location>
    </subcellularLocation>
</comment>
<comment type="similarity">
    <text evidence="1">Belongs to the heat shock protein 90 family.</text>
</comment>
<name>HTPG_MYCVP</name>
<protein>
    <recommendedName>
        <fullName evidence="1">Chaperone protein HtpG</fullName>
    </recommendedName>
    <alternativeName>
        <fullName evidence="1">Heat shock protein HtpG</fullName>
    </alternativeName>
    <alternativeName>
        <fullName evidence="1">High temperature protein G</fullName>
    </alternativeName>
</protein>
<sequence length="651" mass="73460">MAAHVEQLEFQAEARQLLDLMIHSVYSNKDSFLRELVSNASDALDKLRLESFRNKDLDVDTSDLHIEIDVDKEARTLTVRDNGIGMTRDEVVSLIGTLAKSGTGELRQQLREAKDKDTSEELIGQFGIGFYASFMVADRVELLTRKAGESEATRWESSGEGTYTIETVDQAGGEVPQGTSVTLHLKPEDREDELHDYTSEWKIRELVKQYSDFIAWPIRMEVERRTPAPEDGGEESVTVETETLNSMKALWARPRDEVSDEEYTEFYKHVAHAWDEPLEVIAMKAEGTFEYQALLFIPSHAPFDLFNQNAAVGVQLYVKRVFIMGDCDQLMPPYLRFVKGVVDAQDMSLNVSREILQQDRQIRAIRRRLTKKVLSTITEMQTERPEKYRTFWTQFGRVLKEGLLTDIENQETLLRVCSFASTHSEDEPTTLAEYVERMPDGQSQIFYAAGESRQQLLHSPHLEAFKAKGYEVLLLTDPVDEVWVESVHEFDGKPLQSVAKGEVDLDSDADNDGQDAERQEREQGFADLIAWLKEALSDHVKEVRLSTRLTDSPACLITDTFGITPALARMYRASGQPVPVEKRILELNPNHPLITGLREAHKSRGADAELVGTAELLYGTALLAEGGVLEDPARFAGLLADRLTRTVGDQT</sequence>